<reference key="1">
    <citation type="journal article" date="2005" name="Infect. Immun.">
        <title>Whole-genome analyses of speciation events in pathogenic Brucellae.</title>
        <authorList>
            <person name="Chain P.S."/>
            <person name="Comerci D.J."/>
            <person name="Tolmasky M.E."/>
            <person name="Larimer F.W."/>
            <person name="Malfatti S.A."/>
            <person name="Vergez L.M."/>
            <person name="Aguero F."/>
            <person name="Land M.L."/>
            <person name="Ugalde R.A."/>
            <person name="Garcia E."/>
        </authorList>
    </citation>
    <scope>NUCLEOTIDE SEQUENCE [LARGE SCALE GENOMIC DNA]</scope>
    <source>
        <strain>2308</strain>
    </source>
</reference>
<gene>
    <name evidence="1" type="primary">rplX</name>
    <name type="ordered locus">BAB1_1244</name>
</gene>
<evidence type="ECO:0000255" key="1">
    <source>
        <dbReference type="HAMAP-Rule" id="MF_01326"/>
    </source>
</evidence>
<evidence type="ECO:0000305" key="2"/>
<organism>
    <name type="scientific">Brucella abortus (strain 2308)</name>
    <dbReference type="NCBI Taxonomy" id="359391"/>
    <lineage>
        <taxon>Bacteria</taxon>
        <taxon>Pseudomonadati</taxon>
        <taxon>Pseudomonadota</taxon>
        <taxon>Alphaproteobacteria</taxon>
        <taxon>Hyphomicrobiales</taxon>
        <taxon>Brucellaceae</taxon>
        <taxon>Brucella/Ochrobactrum group</taxon>
        <taxon>Brucella</taxon>
    </lineage>
</organism>
<feature type="chain" id="PRO_0000241575" description="Large ribosomal subunit protein uL24">
    <location>
        <begin position="1"/>
        <end position="103"/>
    </location>
</feature>
<comment type="function">
    <text evidence="1">One of two assembly initiator proteins, it binds directly to the 5'-end of the 23S rRNA, where it nucleates assembly of the 50S subunit.</text>
</comment>
<comment type="function">
    <text evidence="1">One of the proteins that surrounds the polypeptide exit tunnel on the outside of the subunit.</text>
</comment>
<comment type="subunit">
    <text evidence="1">Part of the 50S ribosomal subunit.</text>
</comment>
<comment type="similarity">
    <text evidence="1">Belongs to the universal ribosomal protein uL24 family.</text>
</comment>
<proteinExistence type="inferred from homology"/>
<sequence>MQKIRKGDSVVVLSGKDKGRKGEVLKVMPKDEQALVSGINIVKRHQRQTQTQEAGIISKEAPIHLSNLAIADPKDGKPTRVGFRVEDGKKVRVAKRSGALIDG</sequence>
<protein>
    <recommendedName>
        <fullName evidence="1">Large ribosomal subunit protein uL24</fullName>
    </recommendedName>
    <alternativeName>
        <fullName evidence="2">50S ribosomal protein L24</fullName>
    </alternativeName>
</protein>
<name>RL24_BRUA2</name>
<accession>Q2YRA6</accession>
<dbReference type="EMBL" id="AM040264">
    <property type="protein sequence ID" value="CAJ11200.1"/>
    <property type="molecule type" value="Genomic_DNA"/>
</dbReference>
<dbReference type="RefSeq" id="WP_002964351.1">
    <property type="nucleotide sequence ID" value="NZ_KN046823.1"/>
</dbReference>
<dbReference type="SMR" id="Q2YRA6"/>
<dbReference type="STRING" id="359391.BAB1_1244"/>
<dbReference type="GeneID" id="97533535"/>
<dbReference type="KEGG" id="bmf:BAB1_1244"/>
<dbReference type="PATRIC" id="fig|359391.11.peg.144"/>
<dbReference type="HOGENOM" id="CLU_093315_2_2_5"/>
<dbReference type="PhylomeDB" id="Q2YRA6"/>
<dbReference type="Proteomes" id="UP000002719">
    <property type="component" value="Chromosome I"/>
</dbReference>
<dbReference type="GO" id="GO:1990904">
    <property type="term" value="C:ribonucleoprotein complex"/>
    <property type="evidence" value="ECO:0007669"/>
    <property type="project" value="UniProtKB-KW"/>
</dbReference>
<dbReference type="GO" id="GO:0005840">
    <property type="term" value="C:ribosome"/>
    <property type="evidence" value="ECO:0007669"/>
    <property type="project" value="UniProtKB-KW"/>
</dbReference>
<dbReference type="GO" id="GO:0019843">
    <property type="term" value="F:rRNA binding"/>
    <property type="evidence" value="ECO:0007669"/>
    <property type="project" value="UniProtKB-UniRule"/>
</dbReference>
<dbReference type="GO" id="GO:0003735">
    <property type="term" value="F:structural constituent of ribosome"/>
    <property type="evidence" value="ECO:0007669"/>
    <property type="project" value="InterPro"/>
</dbReference>
<dbReference type="GO" id="GO:0006412">
    <property type="term" value="P:translation"/>
    <property type="evidence" value="ECO:0007669"/>
    <property type="project" value="UniProtKB-UniRule"/>
</dbReference>
<dbReference type="CDD" id="cd06089">
    <property type="entry name" value="KOW_RPL26"/>
    <property type="match status" value="1"/>
</dbReference>
<dbReference type="FunFam" id="2.30.30.30:FF:000004">
    <property type="entry name" value="50S ribosomal protein L24"/>
    <property type="match status" value="1"/>
</dbReference>
<dbReference type="Gene3D" id="2.30.30.30">
    <property type="match status" value="1"/>
</dbReference>
<dbReference type="HAMAP" id="MF_01326_B">
    <property type="entry name" value="Ribosomal_uL24_B"/>
    <property type="match status" value="1"/>
</dbReference>
<dbReference type="InterPro" id="IPR005824">
    <property type="entry name" value="KOW"/>
</dbReference>
<dbReference type="InterPro" id="IPR014722">
    <property type="entry name" value="Rib_uL2_dom2"/>
</dbReference>
<dbReference type="InterPro" id="IPR003256">
    <property type="entry name" value="Ribosomal_uL24"/>
</dbReference>
<dbReference type="InterPro" id="IPR005825">
    <property type="entry name" value="Ribosomal_uL24_CS"/>
</dbReference>
<dbReference type="InterPro" id="IPR041988">
    <property type="entry name" value="Ribosomal_uL24_KOW"/>
</dbReference>
<dbReference type="InterPro" id="IPR008991">
    <property type="entry name" value="Translation_prot_SH3-like_sf"/>
</dbReference>
<dbReference type="NCBIfam" id="TIGR01079">
    <property type="entry name" value="rplX_bact"/>
    <property type="match status" value="1"/>
</dbReference>
<dbReference type="PANTHER" id="PTHR12903">
    <property type="entry name" value="MITOCHONDRIAL RIBOSOMAL PROTEIN L24"/>
    <property type="match status" value="1"/>
</dbReference>
<dbReference type="Pfam" id="PF00467">
    <property type="entry name" value="KOW"/>
    <property type="match status" value="1"/>
</dbReference>
<dbReference type="Pfam" id="PF17136">
    <property type="entry name" value="ribosomal_L24"/>
    <property type="match status" value="1"/>
</dbReference>
<dbReference type="SMART" id="SM00739">
    <property type="entry name" value="KOW"/>
    <property type="match status" value="1"/>
</dbReference>
<dbReference type="SUPFAM" id="SSF50104">
    <property type="entry name" value="Translation proteins SH3-like domain"/>
    <property type="match status" value="1"/>
</dbReference>
<dbReference type="PROSITE" id="PS01108">
    <property type="entry name" value="RIBOSOMAL_L24"/>
    <property type="match status" value="1"/>
</dbReference>
<keyword id="KW-1185">Reference proteome</keyword>
<keyword id="KW-0687">Ribonucleoprotein</keyword>
<keyword id="KW-0689">Ribosomal protein</keyword>
<keyword id="KW-0694">RNA-binding</keyword>
<keyword id="KW-0699">rRNA-binding</keyword>